<keyword id="KW-0325">Glycoprotein</keyword>
<keyword id="KW-0472">Membrane</keyword>
<keyword id="KW-1185">Reference proteome</keyword>
<keyword id="KW-0812">Transmembrane</keyword>
<keyword id="KW-1133">Transmembrane helix</keyword>
<keyword id="KW-0813">Transport</keyword>
<evidence type="ECO:0000255" key="1"/>
<evidence type="ECO:0000255" key="2">
    <source>
        <dbReference type="PROSITE-ProRule" id="PRU00498"/>
    </source>
</evidence>
<evidence type="ECO:0000256" key="3">
    <source>
        <dbReference type="SAM" id="MobiDB-lite"/>
    </source>
</evidence>
<evidence type="ECO:0000269" key="4">
    <source>
    </source>
</evidence>
<evidence type="ECO:0000303" key="5">
    <source>
    </source>
</evidence>
<evidence type="ECO:0000305" key="6"/>
<name>THNB_TRIHA</name>
<sequence length="580" mass="62120">MSGDYSATRKSENVDTSTTASQEDSSLAPEQPEKLVGASDVAAVSNNEPTADEYPHGLRLITLVLAINLAMFLASLDQTILGTAIPKITDEFHGLSQVSWYGSAYFMCLGGFQSTWGKVYKYFPLKISFAIAVFVFELGSLICGVARNSNTFIVGRAIAGIGGAGITSGSTVILAFSAEPAKRPTLMSTMGVTYCIAFILGPLIGGAFSEKVTWRWCFYINLPIGGLAMALFFLFFRTPSVSTTQDATLKEKLLHMDPVGTVLAMGGIISFILALQYAGVSHAWNSSVVIGLLVGFVLIMVTLAAWEYFQGDYAMLPYRLFKRRVMWAGGIFQFFFVGCYFLLLFYLPIYFQSIKGVSAIHSGVDNLPLVLSACLFIILGGAAVEKTHMATPYMTAGSAVAAVATGLLYTLDVDTSSGKWIGYQVLVGAGLAFPFQNALNILQAEVDADDMSPATSSLYFFQILGGAFSISAAQAAFNNRLLHSLTINAPGVSPLLVLATGASDLRSVFSADELPGVILSYMDGLKAAFAVSVGLVGMAFLSSLHMVMIDSCETLHTTGDDGAWKGKEVKELEVERLYVN</sequence>
<organism>
    <name type="scientific">Trichoderma harzianum</name>
    <name type="common">Hypocrea lixii</name>
    <dbReference type="NCBI Taxonomy" id="5544"/>
    <lineage>
        <taxon>Eukaryota</taxon>
        <taxon>Fungi</taxon>
        <taxon>Dikarya</taxon>
        <taxon>Ascomycota</taxon>
        <taxon>Pezizomycotina</taxon>
        <taxon>Sordariomycetes</taxon>
        <taxon>Hypocreomycetidae</taxon>
        <taxon>Hypocreales</taxon>
        <taxon>Hypocreaceae</taxon>
        <taxon>Trichoderma</taxon>
    </lineage>
</organism>
<gene>
    <name evidence="5" type="primary">thnB</name>
    <name type="ORF">THAR02_03178</name>
</gene>
<dbReference type="EMBL" id="JOKZ01000069">
    <property type="protein sequence ID" value="KKP04698.1"/>
    <property type="molecule type" value="Genomic_DNA"/>
</dbReference>
<dbReference type="SMR" id="A0A0F9XXG3"/>
<dbReference type="GlyCosmos" id="A0A0F9XXG3">
    <property type="glycosylation" value="1 site, No reported glycans"/>
</dbReference>
<dbReference type="OMA" id="GSAYFMC"/>
<dbReference type="OrthoDB" id="10021397at2759"/>
<dbReference type="Proteomes" id="UP000034112">
    <property type="component" value="Unassembled WGS sequence"/>
</dbReference>
<dbReference type="GO" id="GO:0005886">
    <property type="term" value="C:plasma membrane"/>
    <property type="evidence" value="ECO:0007669"/>
    <property type="project" value="TreeGrafter"/>
</dbReference>
<dbReference type="GO" id="GO:0022857">
    <property type="term" value="F:transmembrane transporter activity"/>
    <property type="evidence" value="ECO:0007669"/>
    <property type="project" value="InterPro"/>
</dbReference>
<dbReference type="CDD" id="cd17502">
    <property type="entry name" value="MFS_Azr1_MDR_like"/>
    <property type="match status" value="1"/>
</dbReference>
<dbReference type="FunFam" id="1.20.1250.20:FF:000196">
    <property type="entry name" value="MFS toxin efflux pump (AflT)"/>
    <property type="match status" value="1"/>
</dbReference>
<dbReference type="FunFam" id="1.20.1720.10:FF:000012">
    <property type="entry name" value="MFS toxin efflux pump (AflT)"/>
    <property type="match status" value="1"/>
</dbReference>
<dbReference type="Gene3D" id="1.20.1250.20">
    <property type="entry name" value="MFS general substrate transporter like domains"/>
    <property type="match status" value="1"/>
</dbReference>
<dbReference type="Gene3D" id="1.20.1720.10">
    <property type="entry name" value="Multidrug resistance protein D"/>
    <property type="match status" value="1"/>
</dbReference>
<dbReference type="InterPro" id="IPR011701">
    <property type="entry name" value="MFS"/>
</dbReference>
<dbReference type="InterPro" id="IPR020846">
    <property type="entry name" value="MFS_dom"/>
</dbReference>
<dbReference type="InterPro" id="IPR036259">
    <property type="entry name" value="MFS_trans_sf"/>
</dbReference>
<dbReference type="PANTHER" id="PTHR23501">
    <property type="entry name" value="MAJOR FACILITATOR SUPERFAMILY"/>
    <property type="match status" value="1"/>
</dbReference>
<dbReference type="PANTHER" id="PTHR23501:SF177">
    <property type="entry name" value="MAJOR FACILITATOR SUPERFAMILY (MFS) PROFILE DOMAIN-CONTAINING PROTEIN-RELATED"/>
    <property type="match status" value="1"/>
</dbReference>
<dbReference type="Pfam" id="PF07690">
    <property type="entry name" value="MFS_1"/>
    <property type="match status" value="1"/>
</dbReference>
<dbReference type="SUPFAM" id="SSF103473">
    <property type="entry name" value="MFS general substrate transporter"/>
    <property type="match status" value="1"/>
</dbReference>
<dbReference type="PROSITE" id="PS50850">
    <property type="entry name" value="MFS"/>
    <property type="match status" value="1"/>
</dbReference>
<protein>
    <recommendedName>
        <fullName evidence="5">MFS-type transporter thnB</fullName>
    </recommendedName>
    <alternativeName>
        <fullName evidence="5">Trihazone biosynthesis cluster protein B</fullName>
    </alternativeName>
</protein>
<feature type="chain" id="PRO_0000455677" description="MFS-type transporter thnB">
    <location>
        <begin position="1"/>
        <end position="580"/>
    </location>
</feature>
<feature type="transmembrane region" description="Helical" evidence="1">
    <location>
        <begin position="60"/>
        <end position="80"/>
    </location>
</feature>
<feature type="transmembrane region" description="Helical" evidence="1">
    <location>
        <begin position="92"/>
        <end position="112"/>
    </location>
</feature>
<feature type="transmembrane region" description="Helical" evidence="1">
    <location>
        <begin position="125"/>
        <end position="145"/>
    </location>
</feature>
<feature type="transmembrane region" description="Helical" evidence="1">
    <location>
        <begin position="157"/>
        <end position="177"/>
    </location>
</feature>
<feature type="transmembrane region" description="Helical" evidence="1">
    <location>
        <begin position="188"/>
        <end position="208"/>
    </location>
</feature>
<feature type="transmembrane region" description="Helical" evidence="1">
    <location>
        <begin position="216"/>
        <end position="236"/>
    </location>
</feature>
<feature type="transmembrane region" description="Helical" evidence="1">
    <location>
        <begin position="259"/>
        <end position="279"/>
    </location>
</feature>
<feature type="transmembrane region" description="Helical" evidence="1">
    <location>
        <begin position="286"/>
        <end position="306"/>
    </location>
</feature>
<feature type="transmembrane region" description="Helical" evidence="1">
    <location>
        <begin position="331"/>
        <end position="351"/>
    </location>
</feature>
<feature type="transmembrane region" description="Helical" evidence="1">
    <location>
        <begin position="364"/>
        <end position="384"/>
    </location>
</feature>
<feature type="transmembrane region" description="Helical" evidence="1">
    <location>
        <begin position="389"/>
        <end position="409"/>
    </location>
</feature>
<feature type="transmembrane region" description="Helical" evidence="1">
    <location>
        <begin position="421"/>
        <end position="441"/>
    </location>
</feature>
<feature type="transmembrane region" description="Helical" evidence="1">
    <location>
        <begin position="457"/>
        <end position="477"/>
    </location>
</feature>
<feature type="transmembrane region" description="Helical" evidence="1">
    <location>
        <begin position="529"/>
        <end position="549"/>
    </location>
</feature>
<feature type="region of interest" description="Disordered" evidence="3">
    <location>
        <begin position="1"/>
        <end position="33"/>
    </location>
</feature>
<feature type="compositionally biased region" description="Polar residues" evidence="3">
    <location>
        <begin position="14"/>
        <end position="25"/>
    </location>
</feature>
<feature type="glycosylation site" description="N-linked (GlcNAc...) asparagine" evidence="2">
    <location>
        <position position="285"/>
    </location>
</feature>
<reference key="1">
    <citation type="journal article" date="2015" name="Genome Announc.">
        <title>Draft whole-genome sequence of the biocontrol agent Trichoderma harzianum T6776.</title>
        <authorList>
            <person name="Baroncelli R."/>
            <person name="Piaggeschi G."/>
            <person name="Fiorini L."/>
            <person name="Bertolini E."/>
            <person name="Zapparata A."/>
            <person name="Pe M.E."/>
            <person name="Sarrocco S."/>
            <person name="Vannacci G."/>
        </authorList>
    </citation>
    <scope>NUCLEOTIDE SEQUENCE [LARGE SCALE GENOMIC DNA]</scope>
    <source>
        <strain>T6776</strain>
    </source>
</reference>
<reference key="2">
    <citation type="journal article" date="2021" name="Org. Biomol. Chem.">
        <title>Genome mining of cryptic tetronate natural products from a PKS-NRPS encoding gene cluster in Trichoderma harzianum t-22.</title>
        <authorList>
            <person name="Zhu Y."/>
            <person name="Wang J."/>
            <person name="Mou P."/>
            <person name="Yan Y."/>
            <person name="Chen M."/>
            <person name="Tang Y."/>
        </authorList>
    </citation>
    <scope>FUNCTION</scope>
</reference>
<comment type="function">
    <text evidence="4">MFS-type transporter; part of the gene cluster that produces the tetronate natural products trihazones.</text>
</comment>
<comment type="subcellular location">
    <subcellularLocation>
        <location evidence="1">Membrane</location>
        <topology evidence="1">Multi-pass membrane protein</topology>
    </subcellularLocation>
</comment>
<comment type="similarity">
    <text evidence="6">Belongs to the major facilitator superfamily.</text>
</comment>
<proteinExistence type="inferred from homology"/>
<accession>A0A0F9XXG3</accession>